<proteinExistence type="evidence at transcript level"/>
<feature type="signal peptide" evidence="2">
    <location>
        <begin position="1"/>
        <end position="22"/>
    </location>
</feature>
<feature type="chain" id="PRO_0000012862" description="Vasoactive intestinal polypeptide receptor 2">
    <location>
        <begin position="23"/>
        <end position="437"/>
    </location>
</feature>
<feature type="topological domain" description="Extracellular" evidence="5">
    <location>
        <begin position="23"/>
        <end position="123"/>
    </location>
</feature>
<feature type="transmembrane region" description="Helical; Name=1" evidence="1">
    <location>
        <begin position="124"/>
        <end position="149"/>
    </location>
</feature>
<feature type="topological domain" description="Cytoplasmic" evidence="5">
    <location>
        <begin position="150"/>
        <end position="157"/>
    </location>
</feature>
<feature type="transmembrane region" description="Helical; Name=2" evidence="1">
    <location>
        <begin position="158"/>
        <end position="179"/>
    </location>
</feature>
<feature type="topological domain" description="Extracellular" evidence="5">
    <location>
        <begin position="180"/>
        <end position="202"/>
    </location>
</feature>
<feature type="transmembrane region" description="Helical; Name=3" evidence="1">
    <location>
        <begin position="203"/>
        <end position="227"/>
    </location>
</feature>
<feature type="topological domain" description="Cytoplasmic" evidence="5">
    <location>
        <begin position="228"/>
        <end position="238"/>
    </location>
</feature>
<feature type="transmembrane region" description="Helical; Name=4" evidence="1">
    <location>
        <begin position="239"/>
        <end position="260"/>
    </location>
</feature>
<feature type="topological domain" description="Extracellular" evidence="5">
    <location>
        <begin position="261"/>
        <end position="279"/>
    </location>
</feature>
<feature type="transmembrane region" description="Helical; Name=5" evidence="1">
    <location>
        <begin position="280"/>
        <end position="303"/>
    </location>
</feature>
<feature type="topological domain" description="Cytoplasmic" evidence="5">
    <location>
        <begin position="304"/>
        <end position="324"/>
    </location>
</feature>
<feature type="transmembrane region" description="Helical; Name=6" evidence="1">
    <location>
        <begin position="325"/>
        <end position="345"/>
    </location>
</feature>
<feature type="topological domain" description="Extracellular" evidence="5">
    <location>
        <begin position="346"/>
        <end position="353"/>
    </location>
</feature>
<feature type="transmembrane region" description="Helical; Name=7" evidence="1">
    <location>
        <begin position="354"/>
        <end position="377"/>
    </location>
</feature>
<feature type="topological domain" description="Cytoplasmic" evidence="5">
    <location>
        <begin position="378"/>
        <end position="437"/>
    </location>
</feature>
<feature type="glycosylation site" description="N-linked (GlcNAc...) asparagine" evidence="2">
    <location>
        <position position="57"/>
    </location>
</feature>
<feature type="glycosylation site" description="N-linked (GlcNAc...) asparagine" evidence="2">
    <location>
        <position position="87"/>
    </location>
</feature>
<feature type="glycosylation site" description="N-linked (GlcNAc...) asparagine" evidence="2">
    <location>
        <position position="91"/>
    </location>
</feature>
<feature type="disulfide bond" evidence="1">
    <location>
        <begin position="37"/>
        <end position="60"/>
    </location>
</feature>
<feature type="disulfide bond" evidence="1">
    <location>
        <begin position="51"/>
        <end position="92"/>
    </location>
</feature>
<feature type="disulfide bond" evidence="1">
    <location>
        <begin position="74"/>
        <end position="108"/>
    </location>
</feature>
<feature type="disulfide bond" evidence="1">
    <location>
        <begin position="201"/>
        <end position="270"/>
    </location>
</feature>
<feature type="sequence conflict" description="In Ref. 2; AAB60459." evidence="5" ref="2">
    <original>C</original>
    <variation>R</variation>
    <location>
        <position position="383"/>
    </location>
</feature>
<reference key="1">
    <citation type="journal article" date="1993" name="FEBS Lett.">
        <title>The VIP2 receptor: molecular characterisation of a cDNA encoding a novel receptor for vasoactive intestinal peptide.</title>
        <authorList>
            <person name="Lutz E.-M."/>
            <person name="Sheward W.J."/>
            <person name="West K.M."/>
            <person name="Morrow J.A."/>
            <person name="Fink G."/>
            <person name="Harmar A.J."/>
        </authorList>
    </citation>
    <scope>NUCLEOTIDE SEQUENCE [MRNA]</scope>
    <scope>FUNCTION</scope>
    <scope>TISSUE SPECIFICITY</scope>
    <source>
        <strain>Sprague-Dawley</strain>
        <tissue>Olfactory bulb</tissue>
    </source>
</reference>
<reference key="2">
    <citation type="journal article" date="1994" name="Endocrinology">
        <title>Two receptors for vasoactive intestinal polypeptide with similar specificity and complementary distributions.</title>
        <authorList>
            <person name="Usdin T.B."/>
            <person name="Bonner T.I."/>
            <person name="Mezey E."/>
        </authorList>
    </citation>
    <scope>NUCLEOTIDE SEQUENCE [MRNA]</scope>
    <scope>FUNCTION</scope>
    <source>
        <tissue>Brain cortex</tissue>
    </source>
</reference>
<organism>
    <name type="scientific">Rattus norvegicus</name>
    <name type="common">Rat</name>
    <dbReference type="NCBI Taxonomy" id="10116"/>
    <lineage>
        <taxon>Eukaryota</taxon>
        <taxon>Metazoa</taxon>
        <taxon>Chordata</taxon>
        <taxon>Craniata</taxon>
        <taxon>Vertebrata</taxon>
        <taxon>Euteleostomi</taxon>
        <taxon>Mammalia</taxon>
        <taxon>Eutheria</taxon>
        <taxon>Euarchontoglires</taxon>
        <taxon>Glires</taxon>
        <taxon>Rodentia</taxon>
        <taxon>Myomorpha</taxon>
        <taxon>Muroidea</taxon>
        <taxon>Muridae</taxon>
        <taxon>Murinae</taxon>
        <taxon>Rattus</taxon>
    </lineage>
</organism>
<accession>P35000</accession>
<gene>
    <name evidence="6" type="primary">Vipr2</name>
</gene>
<sequence length="437" mass="49553">MRASVVLTCYCWLLVRVSSIHPECRFHLEIQEEETKCAELLSSQMENHRACSGVWDNITCWRPADIGETVTVPCPKVFSNFYSRPGNISKNCTSDGWSETFPDFIDACGYNDPEDESKITFYILVKAIYTLGYSVSLMSLTTGSIIICLFRKLHCTRNYIHLNLFLSFMLRAISVLVKDSVLYSSSGTLRCHDQPGSWVGCKLSLVFFQYCIMANFYWLLVEGLYLHTLLVAILPPSRCFLAYLLIGWGIPSVCIGAWIATRLSLEDTGCWDTNDHSIPWWVIRMPILISIVVNFALFISIVRILLQKLTSPDVGGNDQSQYKRLAKSTLLLIPLFGVHYMVFAAFPIGISSTYQILFELCVGSFQGLVVAVLYCFLNSEVQCELKRRWRGLCLTQPGSRDYRLHSWSMSRNGSESALQIHRGSRTQSFLQSETSVI</sequence>
<dbReference type="EMBL" id="Z25885">
    <property type="protein sequence ID" value="CAA81104.1"/>
    <property type="molecule type" value="mRNA"/>
</dbReference>
<dbReference type="EMBL" id="U09631">
    <property type="protein sequence ID" value="AAB60459.1"/>
    <property type="molecule type" value="mRNA"/>
</dbReference>
<dbReference type="PIR" id="S39069">
    <property type="entry name" value="S39069"/>
</dbReference>
<dbReference type="RefSeq" id="NP_058934.2">
    <property type="nucleotide sequence ID" value="NM_017238.2"/>
</dbReference>
<dbReference type="SMR" id="P35000"/>
<dbReference type="BioGRID" id="248189">
    <property type="interactions" value="1"/>
</dbReference>
<dbReference type="FunCoup" id="P35000">
    <property type="interactions" value="131"/>
</dbReference>
<dbReference type="STRING" id="10116.ENSRNOP00000005876"/>
<dbReference type="BindingDB" id="P35000"/>
<dbReference type="GuidetoPHARMACOLOGY" id="372"/>
<dbReference type="GlyCosmos" id="P35000">
    <property type="glycosylation" value="3 sites, No reported glycans"/>
</dbReference>
<dbReference type="GlyGen" id="P35000">
    <property type="glycosylation" value="3 sites"/>
</dbReference>
<dbReference type="iPTMnet" id="P35000"/>
<dbReference type="PhosphoSitePlus" id="P35000"/>
<dbReference type="PaxDb" id="10116-ENSRNOP00000005876"/>
<dbReference type="Ensembl" id="ENSRNOT00000005876.5">
    <property type="protein sequence ID" value="ENSRNOP00000005876.5"/>
    <property type="gene ID" value="ENSRNOG00000004317.5"/>
</dbReference>
<dbReference type="GeneID" id="29555"/>
<dbReference type="KEGG" id="rno:29555"/>
<dbReference type="UCSC" id="RGD:3962">
    <property type="organism name" value="rat"/>
</dbReference>
<dbReference type="AGR" id="RGD:3962"/>
<dbReference type="CTD" id="7434"/>
<dbReference type="RGD" id="3962">
    <property type="gene designation" value="Vipr2"/>
</dbReference>
<dbReference type="eggNOG" id="KOG4564">
    <property type="taxonomic scope" value="Eukaryota"/>
</dbReference>
<dbReference type="GeneTree" id="ENSGT00940000158089"/>
<dbReference type="HOGENOM" id="CLU_002753_4_4_1"/>
<dbReference type="InParanoid" id="P35000"/>
<dbReference type="OMA" id="IWIITRV"/>
<dbReference type="OrthoDB" id="5967113at2759"/>
<dbReference type="PhylomeDB" id="P35000"/>
<dbReference type="TreeFam" id="TF315710"/>
<dbReference type="Reactome" id="R-RNO-420092">
    <property type="pathway name" value="Glucagon-type ligand receptors"/>
</dbReference>
<dbReference type="PRO" id="PR:P35000"/>
<dbReference type="Proteomes" id="UP000002494">
    <property type="component" value="Chromosome 6"/>
</dbReference>
<dbReference type="Bgee" id="ENSRNOG00000004317">
    <property type="expression patterns" value="Expressed in thymus and 15 other cell types or tissues"/>
</dbReference>
<dbReference type="GO" id="GO:0005886">
    <property type="term" value="C:plasma membrane"/>
    <property type="evidence" value="ECO:0000266"/>
    <property type="project" value="RGD"/>
</dbReference>
<dbReference type="GO" id="GO:0008528">
    <property type="term" value="F:G protein-coupled peptide receptor activity"/>
    <property type="evidence" value="ECO:0000318"/>
    <property type="project" value="GO_Central"/>
</dbReference>
<dbReference type="GO" id="GO:0017046">
    <property type="term" value="F:peptide hormone binding"/>
    <property type="evidence" value="ECO:0000318"/>
    <property type="project" value="GO_Central"/>
</dbReference>
<dbReference type="GO" id="GO:0001634">
    <property type="term" value="F:pituitary adenylate cyclase-activating polypeptide receptor activity"/>
    <property type="evidence" value="ECO:0000250"/>
    <property type="project" value="UniProtKB"/>
</dbReference>
<dbReference type="GO" id="GO:0004999">
    <property type="term" value="F:vasoactive intestinal polypeptide receptor activity"/>
    <property type="evidence" value="ECO:0000314"/>
    <property type="project" value="RGD"/>
</dbReference>
<dbReference type="GO" id="GO:0007189">
    <property type="term" value="P:adenylate cyclase-activating G protein-coupled receptor signaling pathway"/>
    <property type="evidence" value="ECO:0000250"/>
    <property type="project" value="UniProtKB"/>
</dbReference>
<dbReference type="GO" id="GO:0007188">
    <property type="term" value="P:adenylate cyclase-modulating G protein-coupled receptor signaling pathway"/>
    <property type="evidence" value="ECO:0000318"/>
    <property type="project" value="GO_Central"/>
</dbReference>
<dbReference type="GO" id="GO:0007166">
    <property type="term" value="P:cell surface receptor signaling pathway"/>
    <property type="evidence" value="ECO:0007669"/>
    <property type="project" value="InterPro"/>
</dbReference>
<dbReference type="GO" id="GO:0048662">
    <property type="term" value="P:negative regulation of smooth muscle cell proliferation"/>
    <property type="evidence" value="ECO:0000315"/>
    <property type="project" value="RGD"/>
</dbReference>
<dbReference type="CDD" id="cd15986">
    <property type="entry name" value="7tmB1_VIP-R2"/>
    <property type="match status" value="1"/>
</dbReference>
<dbReference type="FunFam" id="1.20.1070.10:FF:000032">
    <property type="entry name" value="Vasoactive intestinal polypeptide receptor 1"/>
    <property type="match status" value="1"/>
</dbReference>
<dbReference type="FunFam" id="4.10.1240.10:FF:000015">
    <property type="entry name" value="Vasoactive intestinal polypeptide receptor 2"/>
    <property type="match status" value="1"/>
</dbReference>
<dbReference type="Gene3D" id="4.10.1240.10">
    <property type="entry name" value="GPCR, family 2, extracellular hormone receptor domain"/>
    <property type="match status" value="1"/>
</dbReference>
<dbReference type="Gene3D" id="1.20.1070.10">
    <property type="entry name" value="Rhodopsin 7-helix transmembrane proteins"/>
    <property type="match status" value="1"/>
</dbReference>
<dbReference type="InterPro" id="IPR050332">
    <property type="entry name" value="GPCR_2"/>
</dbReference>
<dbReference type="InterPro" id="IPR017981">
    <property type="entry name" value="GPCR_2-like_7TM"/>
</dbReference>
<dbReference type="InterPro" id="IPR036445">
    <property type="entry name" value="GPCR_2_extracell_dom_sf"/>
</dbReference>
<dbReference type="InterPro" id="IPR001879">
    <property type="entry name" value="GPCR_2_extracellular_dom"/>
</dbReference>
<dbReference type="InterPro" id="IPR000832">
    <property type="entry name" value="GPCR_2_secretin-like"/>
</dbReference>
<dbReference type="InterPro" id="IPR017983">
    <property type="entry name" value="GPCR_2_secretin-like_CS"/>
</dbReference>
<dbReference type="InterPro" id="IPR001571">
    <property type="entry name" value="GPCR_2_VIP_rcpt"/>
</dbReference>
<dbReference type="InterPro" id="IPR002284">
    <property type="entry name" value="GPCR_2_VIP_rcpt_2"/>
</dbReference>
<dbReference type="InterPro" id="IPR047035">
    <property type="entry name" value="VIP-R2_7TM"/>
</dbReference>
<dbReference type="PANTHER" id="PTHR45620">
    <property type="entry name" value="PDF RECEPTOR-LIKE PROTEIN-RELATED"/>
    <property type="match status" value="1"/>
</dbReference>
<dbReference type="PANTHER" id="PTHR45620:SF22">
    <property type="entry name" value="VASOACTIVE INTESTINAL POLYPEPTIDE RECEPTOR 2"/>
    <property type="match status" value="1"/>
</dbReference>
<dbReference type="Pfam" id="PF00002">
    <property type="entry name" value="7tm_2"/>
    <property type="match status" value="1"/>
</dbReference>
<dbReference type="Pfam" id="PF02793">
    <property type="entry name" value="HRM"/>
    <property type="match status" value="1"/>
</dbReference>
<dbReference type="PRINTS" id="PR00249">
    <property type="entry name" value="GPCRSECRETIN"/>
</dbReference>
<dbReference type="PRINTS" id="PR00491">
    <property type="entry name" value="VASOACTVEIPR"/>
</dbReference>
<dbReference type="PRINTS" id="PR01155">
    <property type="entry name" value="VIP2RECEPTOR"/>
</dbReference>
<dbReference type="SMART" id="SM00008">
    <property type="entry name" value="HormR"/>
    <property type="match status" value="1"/>
</dbReference>
<dbReference type="SUPFAM" id="SSF81321">
    <property type="entry name" value="Family A G protein-coupled receptor-like"/>
    <property type="match status" value="1"/>
</dbReference>
<dbReference type="SUPFAM" id="SSF111418">
    <property type="entry name" value="Hormone receptor domain"/>
    <property type="match status" value="1"/>
</dbReference>
<dbReference type="PROSITE" id="PS00649">
    <property type="entry name" value="G_PROTEIN_RECEP_F2_1"/>
    <property type="match status" value="1"/>
</dbReference>
<dbReference type="PROSITE" id="PS00650">
    <property type="entry name" value="G_PROTEIN_RECEP_F2_2"/>
    <property type="match status" value="1"/>
</dbReference>
<dbReference type="PROSITE" id="PS50227">
    <property type="entry name" value="G_PROTEIN_RECEP_F2_3"/>
    <property type="match status" value="1"/>
</dbReference>
<dbReference type="PROSITE" id="PS50261">
    <property type="entry name" value="G_PROTEIN_RECEP_F2_4"/>
    <property type="match status" value="1"/>
</dbReference>
<name>VIPR2_RAT</name>
<protein>
    <recommendedName>
        <fullName>Vasoactive intestinal polypeptide receptor 2</fullName>
        <shortName>VIP-R-2</shortName>
    </recommendedName>
    <alternativeName>
        <fullName>Pituitary adenylate cyclase-activating polypeptide type III receptor</fullName>
        <shortName>PACAP type III receptor</shortName>
        <shortName>PACAP-R-3</shortName>
        <shortName>PACAP-R3</shortName>
    </alternativeName>
</protein>
<comment type="function">
    <text evidence="3 4">G protein-coupled receptor activated by the neuropeptides vasoactive intestinal peptide (VIP) and pituitary adenylate cyclase-activating polypeptide (ADCYAP1/PACAP) (PubMed:7988457, PubMed:8224221). Binds VIP and both PACAP27 and PACAP38 bioactive peptides with the order of ligand affinity of VIP = PACAP38 &gt; PACAP27 (PubMed:8224221). Ligand binding causes a conformation change that triggers signaling via guanine nucleotide-binding proteins (G proteins) and modulates the activity of downstream effectors. Activates cAMP-dependent pathway (PubMed:8224221). May be coupled to phospholipase C.</text>
</comment>
<comment type="subunit">
    <text evidence="1">Interacts with ADCYAP1/PACAP (via N-terminal extracellular domain); activated by PACAP27 and CAPAC38 neuropeptides. Interacts with VIP; the interaction results in VIPR1 activation.</text>
</comment>
<comment type="subcellular location">
    <subcellularLocation>
        <location>Cell membrane</location>
        <topology evidence="1">Multi-pass membrane protein</topology>
    </subcellularLocation>
</comment>
<comment type="tissue specificity">
    <text evidence="4">Mainly in the thalamus, hippocampus and in the suprachiasmatic nucleus.</text>
</comment>
<comment type="similarity">
    <text evidence="5">Belongs to the G-protein coupled receptor 2 family.</text>
</comment>
<keyword id="KW-1003">Cell membrane</keyword>
<keyword id="KW-1015">Disulfide bond</keyword>
<keyword id="KW-0297">G-protein coupled receptor</keyword>
<keyword id="KW-0325">Glycoprotein</keyword>
<keyword id="KW-0472">Membrane</keyword>
<keyword id="KW-0675">Receptor</keyword>
<keyword id="KW-1185">Reference proteome</keyword>
<keyword id="KW-0732">Signal</keyword>
<keyword id="KW-0807">Transducer</keyword>
<keyword id="KW-0812">Transmembrane</keyword>
<keyword id="KW-1133">Transmembrane helix</keyword>
<evidence type="ECO:0000250" key="1">
    <source>
        <dbReference type="UniProtKB" id="P41587"/>
    </source>
</evidence>
<evidence type="ECO:0000255" key="2"/>
<evidence type="ECO:0000269" key="3">
    <source>
    </source>
</evidence>
<evidence type="ECO:0000269" key="4">
    <source>
    </source>
</evidence>
<evidence type="ECO:0000305" key="5"/>
<evidence type="ECO:0000312" key="6">
    <source>
        <dbReference type="RGD" id="3962"/>
    </source>
</evidence>